<organism>
    <name type="scientific">Bacteroides fragilis (strain ATCC 25285 / DSM 2151 / CCUG 4856 / JCM 11019 / LMG 10263 / NCTC 9343 / Onslow / VPI 2553 / EN-2)</name>
    <dbReference type="NCBI Taxonomy" id="272559"/>
    <lineage>
        <taxon>Bacteria</taxon>
        <taxon>Pseudomonadati</taxon>
        <taxon>Bacteroidota</taxon>
        <taxon>Bacteroidia</taxon>
        <taxon>Bacteroidales</taxon>
        <taxon>Bacteroidaceae</taxon>
        <taxon>Bacteroides</taxon>
    </lineage>
</organism>
<keyword id="KW-0255">Endonuclease</keyword>
<keyword id="KW-0378">Hydrolase</keyword>
<keyword id="KW-0479">Metal-binding</keyword>
<keyword id="KW-0540">Nuclease</keyword>
<keyword id="KW-0819">tRNA processing</keyword>
<keyword id="KW-0862">Zinc</keyword>
<feature type="chain" id="PRO_0000155843" description="Ribonuclease Z">
    <location>
        <begin position="1"/>
        <end position="304"/>
    </location>
</feature>
<feature type="active site" description="Proton acceptor" evidence="1">
    <location>
        <position position="67"/>
    </location>
</feature>
<feature type="binding site" evidence="1">
    <location>
        <position position="63"/>
    </location>
    <ligand>
        <name>Zn(2+)</name>
        <dbReference type="ChEBI" id="CHEBI:29105"/>
        <label>1</label>
        <note>catalytic</note>
    </ligand>
</feature>
<feature type="binding site" evidence="1">
    <location>
        <position position="65"/>
    </location>
    <ligand>
        <name>Zn(2+)</name>
        <dbReference type="ChEBI" id="CHEBI:29105"/>
        <label>1</label>
        <note>catalytic</note>
    </ligand>
</feature>
<feature type="binding site" evidence="1">
    <location>
        <position position="67"/>
    </location>
    <ligand>
        <name>Zn(2+)</name>
        <dbReference type="ChEBI" id="CHEBI:29105"/>
        <label>2</label>
        <note>catalytic</note>
    </ligand>
</feature>
<feature type="binding site" evidence="1">
    <location>
        <position position="68"/>
    </location>
    <ligand>
        <name>Zn(2+)</name>
        <dbReference type="ChEBI" id="CHEBI:29105"/>
        <label>2</label>
        <note>catalytic</note>
    </ligand>
</feature>
<feature type="binding site" evidence="1">
    <location>
        <position position="143"/>
    </location>
    <ligand>
        <name>Zn(2+)</name>
        <dbReference type="ChEBI" id="CHEBI:29105"/>
        <label>1</label>
        <note>catalytic</note>
    </ligand>
</feature>
<feature type="binding site" evidence="1">
    <location>
        <position position="213"/>
    </location>
    <ligand>
        <name>Zn(2+)</name>
        <dbReference type="ChEBI" id="CHEBI:29105"/>
        <label>1</label>
        <note>catalytic</note>
    </ligand>
</feature>
<feature type="binding site" evidence="1">
    <location>
        <position position="213"/>
    </location>
    <ligand>
        <name>Zn(2+)</name>
        <dbReference type="ChEBI" id="CHEBI:29105"/>
        <label>2</label>
        <note>catalytic</note>
    </ligand>
</feature>
<feature type="binding site" evidence="1">
    <location>
        <position position="271"/>
    </location>
    <ligand>
        <name>Zn(2+)</name>
        <dbReference type="ChEBI" id="CHEBI:29105"/>
        <label>2</label>
        <note>catalytic</note>
    </ligand>
</feature>
<evidence type="ECO:0000255" key="1">
    <source>
        <dbReference type="HAMAP-Rule" id="MF_01818"/>
    </source>
</evidence>
<gene>
    <name evidence="1" type="primary">rnz</name>
    <name type="ordered locus">BF0960</name>
</gene>
<name>RNZ_BACFN</name>
<reference key="1">
    <citation type="journal article" date="2005" name="Science">
        <title>Extensive DNA inversions in the B. fragilis genome control variable gene expression.</title>
        <authorList>
            <person name="Cerdeno-Tarraga A.-M."/>
            <person name="Patrick S."/>
            <person name="Crossman L.C."/>
            <person name="Blakely G."/>
            <person name="Abratt V."/>
            <person name="Lennard N."/>
            <person name="Poxton I."/>
            <person name="Duerden B."/>
            <person name="Harris B."/>
            <person name="Quail M.A."/>
            <person name="Barron A."/>
            <person name="Clark L."/>
            <person name="Corton C."/>
            <person name="Doggett J."/>
            <person name="Holden M.T.G."/>
            <person name="Larke N."/>
            <person name="Line A."/>
            <person name="Lord A."/>
            <person name="Norbertczak H."/>
            <person name="Ormond D."/>
            <person name="Price C."/>
            <person name="Rabbinowitsch E."/>
            <person name="Woodward J."/>
            <person name="Barrell B.G."/>
            <person name="Parkhill J."/>
        </authorList>
    </citation>
    <scope>NUCLEOTIDE SEQUENCE [LARGE SCALE GENOMIC DNA]</scope>
    <source>
        <strain>ATCC 25285 / DSM 2151 / CCUG 4856 / JCM 11019 / LMG 10263 / NCTC 9343 / Onslow / VPI 2553 / EN-2</strain>
    </source>
</reference>
<protein>
    <recommendedName>
        <fullName evidence="1">Ribonuclease Z</fullName>
        <shortName evidence="1">RNase Z</shortName>
        <ecNumber evidence="1">3.1.26.11</ecNumber>
    </recommendedName>
    <alternativeName>
        <fullName evidence="1">tRNA 3 endonuclease</fullName>
    </alternativeName>
    <alternativeName>
        <fullName evidence="1">tRNase Z</fullName>
    </alternativeName>
</protein>
<dbReference type="EC" id="3.1.26.11" evidence="1"/>
<dbReference type="EMBL" id="CR626927">
    <property type="protein sequence ID" value="CAH06701.1"/>
    <property type="molecule type" value="Genomic_DNA"/>
</dbReference>
<dbReference type="RefSeq" id="WP_005785400.1">
    <property type="nucleotide sequence ID" value="NZ_UFTH01000001.1"/>
</dbReference>
<dbReference type="SMR" id="Q5LGN7"/>
<dbReference type="PaxDb" id="272559-BF9343_0920"/>
<dbReference type="KEGG" id="bfs:BF9343_0920"/>
<dbReference type="eggNOG" id="COG1234">
    <property type="taxonomic scope" value="Bacteria"/>
</dbReference>
<dbReference type="HOGENOM" id="CLU_031317_2_1_10"/>
<dbReference type="Proteomes" id="UP000006731">
    <property type="component" value="Chromosome"/>
</dbReference>
<dbReference type="GO" id="GO:0042781">
    <property type="term" value="F:3'-tRNA processing endoribonuclease activity"/>
    <property type="evidence" value="ECO:0007669"/>
    <property type="project" value="UniProtKB-UniRule"/>
</dbReference>
<dbReference type="GO" id="GO:0008270">
    <property type="term" value="F:zinc ion binding"/>
    <property type="evidence" value="ECO:0007669"/>
    <property type="project" value="UniProtKB-UniRule"/>
</dbReference>
<dbReference type="CDD" id="cd07717">
    <property type="entry name" value="RNaseZ_ZiPD-like_MBL-fold"/>
    <property type="match status" value="1"/>
</dbReference>
<dbReference type="Gene3D" id="3.60.15.10">
    <property type="entry name" value="Ribonuclease Z/Hydroxyacylglutathione hydrolase-like"/>
    <property type="match status" value="1"/>
</dbReference>
<dbReference type="HAMAP" id="MF_01818">
    <property type="entry name" value="RNase_Z_BN"/>
    <property type="match status" value="1"/>
</dbReference>
<dbReference type="InterPro" id="IPR001279">
    <property type="entry name" value="Metallo-B-lactamas"/>
</dbReference>
<dbReference type="InterPro" id="IPR036866">
    <property type="entry name" value="RibonucZ/Hydroxyglut_hydro"/>
</dbReference>
<dbReference type="InterPro" id="IPR013471">
    <property type="entry name" value="RNase_Z/BN"/>
</dbReference>
<dbReference type="NCBIfam" id="NF000801">
    <property type="entry name" value="PRK00055.1-3"/>
    <property type="match status" value="1"/>
</dbReference>
<dbReference type="NCBIfam" id="TIGR02651">
    <property type="entry name" value="RNase_Z"/>
    <property type="match status" value="1"/>
</dbReference>
<dbReference type="PANTHER" id="PTHR46018">
    <property type="entry name" value="ZINC PHOSPHODIESTERASE ELAC PROTEIN 1"/>
    <property type="match status" value="1"/>
</dbReference>
<dbReference type="PANTHER" id="PTHR46018:SF2">
    <property type="entry name" value="ZINC PHOSPHODIESTERASE ELAC PROTEIN 1"/>
    <property type="match status" value="1"/>
</dbReference>
<dbReference type="Pfam" id="PF12706">
    <property type="entry name" value="Lactamase_B_2"/>
    <property type="match status" value="2"/>
</dbReference>
<dbReference type="SUPFAM" id="SSF56281">
    <property type="entry name" value="Metallo-hydrolase/oxidoreductase"/>
    <property type="match status" value="1"/>
</dbReference>
<comment type="function">
    <text evidence="1">Zinc phosphodiesterase, which displays some tRNA 3'-processing endonuclease activity. Probably involved in tRNA maturation, by removing a 3'-trailer from precursor tRNA.</text>
</comment>
<comment type="catalytic activity">
    <reaction evidence="1">
        <text>Endonucleolytic cleavage of RNA, removing extra 3' nucleotides from tRNA precursor, generating 3' termini of tRNAs. A 3'-hydroxy group is left at the tRNA terminus and a 5'-phosphoryl group is left at the trailer molecule.</text>
        <dbReference type="EC" id="3.1.26.11"/>
    </reaction>
</comment>
<comment type="cofactor">
    <cofactor evidence="1">
        <name>Zn(2+)</name>
        <dbReference type="ChEBI" id="CHEBI:29105"/>
    </cofactor>
    <text evidence="1">Binds 2 Zn(2+) ions.</text>
</comment>
<comment type="subunit">
    <text evidence="1">Homodimer.</text>
</comment>
<comment type="similarity">
    <text evidence="1">Belongs to the RNase Z family.</text>
</comment>
<sequence>MEKFELHILGCGSALPTTRHFATSQVVNLRDKLFMIDCGEGAQMQLRKSRLKFSRLNHIFISHLHGDHCFGLMGLISTFGLLGRTAELHIHSPKGLEELLTPMLNFFCHTLAYKVIFHEFDTRQTSVVYEDRSMTVTTIPLQHRIPCCGFLFAEKARPNHIIRDMVDFYKVPVYELNRIKNGSDYVTPEGEVIANTRLTRPSDPPRKYAYCSDTIFRPEIVKQLSGVDLLFHEATFAESELARAKETYHTTAAQAARIALEAGVRQLVIGHFSARYEDESILLKEASAVFPNTILAKENLCISL</sequence>
<proteinExistence type="inferred from homology"/>
<accession>Q5LGN7</accession>